<reference key="1">
    <citation type="journal article" date="2007" name="J. Bacteriol.">
        <title>Catalytic properties of Staphylococcus aureus and Bacillus members of the secondary cation/proton antiporter-3 (Mrp) family are revealed by an optimized assay in an Escherichia coli host.</title>
        <authorList>
            <person name="Swartz T.H."/>
            <person name="Ito M."/>
            <person name="Ohira T."/>
            <person name="Natsui S."/>
            <person name="Hicks D.B."/>
            <person name="Krulwich T.A."/>
        </authorList>
    </citation>
    <scope>NUCLEOTIDE SEQUENCE [GENOMIC DNA]</scope>
    <scope>EXPRESSION IN E.COLI</scope>
    <source>
        <strain>RF4220</strain>
    </source>
</reference>
<organism>
    <name type="scientific">Staphylococcus aureus</name>
    <dbReference type="NCBI Taxonomy" id="1280"/>
    <lineage>
        <taxon>Bacteria</taxon>
        <taxon>Bacillati</taxon>
        <taxon>Bacillota</taxon>
        <taxon>Bacilli</taxon>
        <taxon>Bacillales</taxon>
        <taxon>Staphylococcaceae</taxon>
        <taxon>Staphylococcus</taxon>
    </lineage>
</organism>
<accession>Q0Q2J7</accession>
<evidence type="ECO:0000250" key="1"/>
<evidence type="ECO:0000255" key="2"/>
<evidence type="ECO:0000305" key="3"/>
<comment type="function">
    <text>Expression of the mnh2 operon in E.coli is not able to catalyze Na(+)Li(+)/H(+) antiport. It does however confer higher growth rates than the control strain at up to pH 9.5. The operon may encode an NADH-ubiquinone oxidoreductase.</text>
</comment>
<comment type="subunit">
    <text evidence="1">May form a heterooligomeric complex that consists of seven subunits: mnhA2, mnhB2, mnhC2, mnhD2, mnhE2, mnhF2 and mnhG2.</text>
</comment>
<comment type="subcellular location">
    <subcellularLocation>
        <location evidence="3">Cell membrane</location>
        <topology evidence="3">Multi-pass membrane protein</topology>
    </subcellularLocation>
</comment>
<comment type="similarity">
    <text evidence="3">Belongs to the CPA3 antiporters (TC 2.A.63) subunit D family.</text>
</comment>
<keyword id="KW-0050">Antiport</keyword>
<keyword id="KW-1003">Cell membrane</keyword>
<keyword id="KW-0406">Ion transport</keyword>
<keyword id="KW-0472">Membrane</keyword>
<keyword id="KW-0812">Transmembrane</keyword>
<keyword id="KW-1133">Transmembrane helix</keyword>
<keyword id="KW-0813">Transport</keyword>
<proteinExistence type="inferred from homology"/>
<dbReference type="EMBL" id="DQ659239">
    <property type="protein sequence ID" value="ABG67120.1"/>
    <property type="molecule type" value="Genomic_DNA"/>
</dbReference>
<dbReference type="SMR" id="Q0Q2J7"/>
<dbReference type="GO" id="GO:0005886">
    <property type="term" value="C:plasma membrane"/>
    <property type="evidence" value="ECO:0007669"/>
    <property type="project" value="UniProtKB-SubCell"/>
</dbReference>
<dbReference type="GO" id="GO:0015297">
    <property type="term" value="F:antiporter activity"/>
    <property type="evidence" value="ECO:0007669"/>
    <property type="project" value="UniProtKB-KW"/>
</dbReference>
<dbReference type="GO" id="GO:0008137">
    <property type="term" value="F:NADH dehydrogenase (ubiquinone) activity"/>
    <property type="evidence" value="ECO:0007669"/>
    <property type="project" value="InterPro"/>
</dbReference>
<dbReference type="GO" id="GO:0042773">
    <property type="term" value="P:ATP synthesis coupled electron transport"/>
    <property type="evidence" value="ECO:0007669"/>
    <property type="project" value="InterPro"/>
</dbReference>
<dbReference type="InterPro" id="IPR050586">
    <property type="entry name" value="CPA3_Na-H_Antiporter_D"/>
</dbReference>
<dbReference type="InterPro" id="IPR003918">
    <property type="entry name" value="NADH_UbQ_OxRdtase"/>
</dbReference>
<dbReference type="InterPro" id="IPR001750">
    <property type="entry name" value="ND/Mrp_TM"/>
</dbReference>
<dbReference type="NCBIfam" id="NF009306">
    <property type="entry name" value="PRK12663.1"/>
    <property type="match status" value="1"/>
</dbReference>
<dbReference type="PANTHER" id="PTHR42703:SF1">
    <property type="entry name" value="NA(+)_H(+) ANTIPORTER SUBUNIT D1"/>
    <property type="match status" value="1"/>
</dbReference>
<dbReference type="PANTHER" id="PTHR42703">
    <property type="entry name" value="NADH DEHYDROGENASE"/>
    <property type="match status" value="1"/>
</dbReference>
<dbReference type="Pfam" id="PF00361">
    <property type="entry name" value="Proton_antipo_M"/>
    <property type="match status" value="1"/>
</dbReference>
<dbReference type="PRINTS" id="PR01437">
    <property type="entry name" value="NUOXDRDTASE4"/>
</dbReference>
<gene>
    <name type="primary">mnhD2</name>
    <name type="synonym">mrpD2</name>
</gene>
<protein>
    <recommendedName>
        <fullName>Putative antiporter subunit mnhD2</fullName>
    </recommendedName>
    <alternativeName>
        <fullName>Mrp complex subunit D2</fullName>
    </alternativeName>
    <alternativeName>
        <fullName>Putative NADH-ubiquinone oxidoreductase subunit mnhD2</fullName>
    </alternativeName>
</protein>
<sequence length="499" mass="55284">MMLSNLLILPMLLPFLCALILVFLKNNDRISKYLYLGTMTITTIISLMLLIYVQRHRPITLDFGGWSAPFGIQFLGDSLSLIMVTTASFVITLIMAYGFGRGEHKANRYHLPSFILFLSVGVIGSFLTSDLFNLYVMFEIMLLASFVLITLGQSVEQLRAAIIYVVLNIIGSWLFLLGIGLLYKTVGTLNFSHIAMRLNDMGDNRTVTMISLIFLVAFSAKAALVLFMWLPKAYAVLNTELAALFAALMTKVGAYALIRFFTLLFDQHNDLIHPLLATMAAITMVIGAIGVIAYKDIKKIAAYQVIISIGFIILGLGTNTFAGINGAIFYLVNDIVVKTLLFFIIGSLVYITGYRQYQYLNGLAKKEPLFGVAFIIMIFAIGGVPPFSGFPGKVLIFQGALQNGNYIGLALMIITSLIAMYSLFRILFYMYFGDKDGEEVNFKKIPLYRKRILSILVVVVIAIGIAAPVVLNVTSDATELNTSDQLYQKLVNPHLKGED</sequence>
<feature type="chain" id="PRO_0000372228" description="Putative antiporter subunit mnhD2">
    <location>
        <begin position="1"/>
        <end position="499"/>
    </location>
</feature>
<feature type="transmembrane region" description="Helical" evidence="2">
    <location>
        <begin position="3"/>
        <end position="23"/>
    </location>
</feature>
<feature type="transmembrane region" description="Helical" evidence="2">
    <location>
        <begin position="33"/>
        <end position="53"/>
    </location>
</feature>
<feature type="transmembrane region" description="Helical" evidence="2">
    <location>
        <begin position="79"/>
        <end position="99"/>
    </location>
</feature>
<feature type="transmembrane region" description="Helical" evidence="2">
    <location>
        <begin position="109"/>
        <end position="129"/>
    </location>
</feature>
<feature type="transmembrane region" description="Helical" evidence="2">
    <location>
        <begin position="131"/>
        <end position="151"/>
    </location>
</feature>
<feature type="transmembrane region" description="Helical" evidence="2">
    <location>
        <begin position="162"/>
        <end position="182"/>
    </location>
</feature>
<feature type="transmembrane region" description="Helical" evidence="2">
    <location>
        <begin position="210"/>
        <end position="230"/>
    </location>
</feature>
<feature type="transmembrane region" description="Helical" evidence="2">
    <location>
        <begin position="241"/>
        <end position="261"/>
    </location>
</feature>
<feature type="transmembrane region" description="Helical" evidence="2">
    <location>
        <begin position="272"/>
        <end position="292"/>
    </location>
</feature>
<feature type="transmembrane region" description="Helical" evidence="2">
    <location>
        <begin position="309"/>
        <end position="329"/>
    </location>
</feature>
<feature type="transmembrane region" description="Helical" evidence="2">
    <location>
        <begin position="331"/>
        <end position="351"/>
    </location>
</feature>
<feature type="transmembrane region" description="Helical" evidence="2">
    <location>
        <begin position="370"/>
        <end position="390"/>
    </location>
</feature>
<feature type="transmembrane region" description="Helical" evidence="2">
    <location>
        <begin position="404"/>
        <end position="424"/>
    </location>
</feature>
<feature type="transmembrane region" description="Helical" evidence="2">
    <location>
        <begin position="452"/>
        <end position="472"/>
    </location>
</feature>
<name>MNHD2_STAAU</name>